<evidence type="ECO:0000250" key="1">
    <source>
        <dbReference type="UniProtKB" id="Q8ND71"/>
    </source>
</evidence>
<evidence type="ECO:0000250" key="2">
    <source>
        <dbReference type="UniProtKB" id="Q8WWP7"/>
    </source>
</evidence>
<evidence type="ECO:0000250" key="3">
    <source>
        <dbReference type="UniProtKB" id="Q9UG22"/>
    </source>
</evidence>
<evidence type="ECO:0000255" key="4">
    <source>
        <dbReference type="PROSITE-ProRule" id="PRU01057"/>
    </source>
</evidence>
<evidence type="ECO:0000256" key="5">
    <source>
        <dbReference type="SAM" id="MobiDB-lite"/>
    </source>
</evidence>
<evidence type="ECO:0000269" key="6">
    <source>
    </source>
</evidence>
<evidence type="ECO:0000269" key="7">
    <source>
    </source>
</evidence>
<evidence type="ECO:0000303" key="8">
    <source>
    </source>
</evidence>
<evidence type="ECO:0000305" key="9"/>
<keyword id="KW-0963">Cytoplasm</keyword>
<keyword id="KW-0256">Endoplasmic reticulum</keyword>
<keyword id="KW-0333">Golgi apparatus</keyword>
<keyword id="KW-0342">GTP-binding</keyword>
<keyword id="KW-0496">Mitochondrion</keyword>
<keyword id="KW-0547">Nucleotide-binding</keyword>
<keyword id="KW-1185">Reference proteome</keyword>
<keyword id="KW-0677">Repeat</keyword>
<comment type="function">
    <text evidence="6">Exerts an anti-apoptotic effect in the immune system and is involved in responses to infections.</text>
</comment>
<comment type="subcellular location">
    <subcellularLocation>
        <location evidence="6">Endoplasmic reticulum</location>
    </subcellularLocation>
    <subcellularLocation>
        <location evidence="6">Golgi apparatus</location>
    </subcellularLocation>
    <subcellularLocation>
        <location evidence="6">Mitochondrion</location>
    </subcellularLocation>
    <subcellularLocation>
        <location evidence="1">Cytoplasm</location>
        <location evidence="1">Cytosol</location>
    </subcellularLocation>
</comment>
<comment type="tissue specificity">
    <text evidence="6 7">Abundantly expressed in the thymus (in thymocytes), spleen (in splenocytes), lymph node, followed by bone marrow and lung.</text>
</comment>
<comment type="similarity">
    <text evidence="9">Belongs to the TRAFAC class TrmE-Era-EngA-EngB-Septin-like GTPase superfamily. AIG1/Toc34/Toc159-like paraseptin GTPase family. IAN subfamily.</text>
</comment>
<accession>Q75N62</accession>
<accession>Q3UZ12</accession>
<sequence length="688" mass="76843">MATSSHQGAAAGSQAEHRSCEASVGQGERPSASQGQEGNFKQNQGTSTLRLLLLGKQGAGKSATGNTILGKAVFESKFSDHMVTDRCQSESVSVRGKQVIVIDTPDLFSSLSCSEVRQQNLKQCLELLADDHCVLLLVTPIGHYTEEDRETIEGIWGKIGPKAYRHMIVVFTREDELDEDSLWNYIESKESLKELIKNIGSRRCCTFNNKADKKQRELQVFKLLDAIELLMMESPEPYFEPLKMESSGVQGCGNGVTYEGDTLCGSKKRQPQITGPDCDPDMPELRVLLMGKRGVGKSAAGNSILGKQVFKTQFSEKQRVTKAFASHSRVWQGKKVLIIDSPEISSWKLDESAVKNHTFPGPHAFLLVTPLGSSLKSDDDVFSIIKRIFGEKFTKFTIVLFTRKEDFEDQALDKVIKENDALYNLTQKFGERYAIFNYRASVEEEQSQVGKLLSQIEKMVQCHSNKPCVIREKELLNIILLGRSGAGKSATGNTILGRSAFFSQLRAQPVTSSSQSGKRTLDWQDVVVVDTPSFIQTPGTEKDPSRLKEEIHHCLSLCEEGMKIFVLVLQLGRFTQEDEVVVEQLEASFEENIMKYMIVLFTRKEDLGDGDLHDYTNNTKNKALKKILKKCNGRVCAFNNKETGEDQETQVKGLLKIANSLKKNYDEHSNSWVGQLKSTLGQITMAFK</sequence>
<feature type="chain" id="PRO_0000341971" description="GTPase IMAP family member 8">
    <location>
        <begin position="1"/>
        <end position="688"/>
    </location>
</feature>
<feature type="domain" description="AIG1-type G 1" evidence="4">
    <location>
        <begin position="46"/>
        <end position="247"/>
    </location>
</feature>
<feature type="domain" description="AIG1-type G 2" evidence="4">
    <location>
        <begin position="282"/>
        <end position="472"/>
    </location>
</feature>
<feature type="domain" description="AIG1-type G 3" evidence="4">
    <location>
        <begin position="473"/>
        <end position="677"/>
    </location>
</feature>
<feature type="region of interest" description="Disordered" evidence="5">
    <location>
        <begin position="1"/>
        <end position="42"/>
    </location>
</feature>
<feature type="region of interest" description="G1" evidence="4">
    <location>
        <begin position="55"/>
        <end position="62"/>
    </location>
</feature>
<feature type="region of interest" description="G2" evidence="4">
    <location>
        <begin position="82"/>
        <end position="86"/>
    </location>
</feature>
<feature type="region of interest" description="G3" evidence="4">
    <location>
        <begin position="103"/>
        <end position="106"/>
    </location>
</feature>
<feature type="region of interest" description="G4" evidence="4">
    <location>
        <begin position="172"/>
        <end position="175"/>
    </location>
</feature>
<feature type="region of interest" description="G5" evidence="4">
    <location>
        <begin position="208"/>
        <end position="210"/>
    </location>
</feature>
<feature type="compositionally biased region" description="Low complexity" evidence="5">
    <location>
        <begin position="1"/>
        <end position="14"/>
    </location>
</feature>
<feature type="compositionally biased region" description="Polar residues" evidence="5">
    <location>
        <begin position="31"/>
        <end position="42"/>
    </location>
</feature>
<feature type="binding site" evidence="2">
    <location>
        <begin position="55"/>
        <end position="63"/>
    </location>
    <ligand>
        <name>GTP</name>
        <dbReference type="ChEBI" id="CHEBI:37565"/>
    </ligand>
</feature>
<feature type="binding site" evidence="3">
    <location>
        <position position="76"/>
    </location>
    <ligand>
        <name>GTP</name>
        <dbReference type="ChEBI" id="CHEBI:37565"/>
    </ligand>
</feature>
<feature type="binding site" evidence="2">
    <location>
        <begin position="173"/>
        <end position="175"/>
    </location>
    <ligand>
        <name>GTP</name>
        <dbReference type="ChEBI" id="CHEBI:37565"/>
    </ligand>
</feature>
<feature type="binding site" evidence="2">
    <location>
        <position position="209"/>
    </location>
    <ligand>
        <name>GTP</name>
        <dbReference type="ChEBI" id="CHEBI:37565"/>
    </ligand>
</feature>
<feature type="sequence conflict" description="In Ref. 3; BAE22049." evidence="9" ref="3">
    <original>C</original>
    <variation>Y</variation>
    <location>
        <position position="204"/>
    </location>
</feature>
<reference key="1">
    <citation type="journal article" date="2005" name="J. Cell. Biochem.">
        <title>Malaria-suppressible expression of the anti-apoptotic triple GTPase mGIMAP8.</title>
        <authorList>
            <person name="Kruecken J."/>
            <person name="Epe M."/>
            <person name="Benten W.P."/>
            <person name="Falkenroth N."/>
            <person name="Wunderlich F."/>
        </authorList>
    </citation>
    <scope>NUCLEOTIDE SEQUENCE [MRNA]</scope>
    <scope>FUNCTION</scope>
    <scope>SUBCELLULAR LOCATION</scope>
    <scope>TISSUE SPECIFICITY</scope>
</reference>
<reference key="2">
    <citation type="journal article" date="2006" name="PLoS Biol.">
        <title>IAN family critically regulates survival and development of T lymphocytes.</title>
        <authorList>
            <person name="Nitta T."/>
            <person name="Nasreen M."/>
            <person name="Seike T."/>
            <person name="Goji A."/>
            <person name="Ohigashi I."/>
            <person name="Miyazaki T."/>
            <person name="Ohta T."/>
            <person name="Kanno M."/>
            <person name="Takahama Y."/>
        </authorList>
    </citation>
    <scope>NUCLEOTIDE SEQUENCE [MRNA]</scope>
    <scope>TISSUE SPECIFICITY</scope>
    <source>
        <strain>C57BL/6J</strain>
    </source>
</reference>
<reference key="3">
    <citation type="journal article" date="2005" name="Science">
        <title>The transcriptional landscape of the mammalian genome.</title>
        <authorList>
            <person name="Carninci P."/>
            <person name="Kasukawa T."/>
            <person name="Katayama S."/>
            <person name="Gough J."/>
            <person name="Frith M.C."/>
            <person name="Maeda N."/>
            <person name="Oyama R."/>
            <person name="Ravasi T."/>
            <person name="Lenhard B."/>
            <person name="Wells C."/>
            <person name="Kodzius R."/>
            <person name="Shimokawa K."/>
            <person name="Bajic V.B."/>
            <person name="Brenner S.E."/>
            <person name="Batalov S."/>
            <person name="Forrest A.R."/>
            <person name="Zavolan M."/>
            <person name="Davis M.J."/>
            <person name="Wilming L.G."/>
            <person name="Aidinis V."/>
            <person name="Allen J.E."/>
            <person name="Ambesi-Impiombato A."/>
            <person name="Apweiler R."/>
            <person name="Aturaliya R.N."/>
            <person name="Bailey T.L."/>
            <person name="Bansal M."/>
            <person name="Baxter L."/>
            <person name="Beisel K.W."/>
            <person name="Bersano T."/>
            <person name="Bono H."/>
            <person name="Chalk A.M."/>
            <person name="Chiu K.P."/>
            <person name="Choudhary V."/>
            <person name="Christoffels A."/>
            <person name="Clutterbuck D.R."/>
            <person name="Crowe M.L."/>
            <person name="Dalla E."/>
            <person name="Dalrymple B.P."/>
            <person name="de Bono B."/>
            <person name="Della Gatta G."/>
            <person name="di Bernardo D."/>
            <person name="Down T."/>
            <person name="Engstrom P."/>
            <person name="Fagiolini M."/>
            <person name="Faulkner G."/>
            <person name="Fletcher C.F."/>
            <person name="Fukushima T."/>
            <person name="Furuno M."/>
            <person name="Futaki S."/>
            <person name="Gariboldi M."/>
            <person name="Georgii-Hemming P."/>
            <person name="Gingeras T.R."/>
            <person name="Gojobori T."/>
            <person name="Green R.E."/>
            <person name="Gustincich S."/>
            <person name="Harbers M."/>
            <person name="Hayashi Y."/>
            <person name="Hensch T.K."/>
            <person name="Hirokawa N."/>
            <person name="Hill D."/>
            <person name="Huminiecki L."/>
            <person name="Iacono M."/>
            <person name="Ikeo K."/>
            <person name="Iwama A."/>
            <person name="Ishikawa T."/>
            <person name="Jakt M."/>
            <person name="Kanapin A."/>
            <person name="Katoh M."/>
            <person name="Kawasawa Y."/>
            <person name="Kelso J."/>
            <person name="Kitamura H."/>
            <person name="Kitano H."/>
            <person name="Kollias G."/>
            <person name="Krishnan S.P."/>
            <person name="Kruger A."/>
            <person name="Kummerfeld S.K."/>
            <person name="Kurochkin I.V."/>
            <person name="Lareau L.F."/>
            <person name="Lazarevic D."/>
            <person name="Lipovich L."/>
            <person name="Liu J."/>
            <person name="Liuni S."/>
            <person name="McWilliam S."/>
            <person name="Madan Babu M."/>
            <person name="Madera M."/>
            <person name="Marchionni L."/>
            <person name="Matsuda H."/>
            <person name="Matsuzawa S."/>
            <person name="Miki H."/>
            <person name="Mignone F."/>
            <person name="Miyake S."/>
            <person name="Morris K."/>
            <person name="Mottagui-Tabar S."/>
            <person name="Mulder N."/>
            <person name="Nakano N."/>
            <person name="Nakauchi H."/>
            <person name="Ng P."/>
            <person name="Nilsson R."/>
            <person name="Nishiguchi S."/>
            <person name="Nishikawa S."/>
            <person name="Nori F."/>
            <person name="Ohara O."/>
            <person name="Okazaki Y."/>
            <person name="Orlando V."/>
            <person name="Pang K.C."/>
            <person name="Pavan W.J."/>
            <person name="Pavesi G."/>
            <person name="Pesole G."/>
            <person name="Petrovsky N."/>
            <person name="Piazza S."/>
            <person name="Reed J."/>
            <person name="Reid J.F."/>
            <person name="Ring B.Z."/>
            <person name="Ringwald M."/>
            <person name="Rost B."/>
            <person name="Ruan Y."/>
            <person name="Salzberg S.L."/>
            <person name="Sandelin A."/>
            <person name="Schneider C."/>
            <person name="Schoenbach C."/>
            <person name="Sekiguchi K."/>
            <person name="Semple C.A."/>
            <person name="Seno S."/>
            <person name="Sessa L."/>
            <person name="Sheng Y."/>
            <person name="Shibata Y."/>
            <person name="Shimada H."/>
            <person name="Shimada K."/>
            <person name="Silva D."/>
            <person name="Sinclair B."/>
            <person name="Sperling S."/>
            <person name="Stupka E."/>
            <person name="Sugiura K."/>
            <person name="Sultana R."/>
            <person name="Takenaka Y."/>
            <person name="Taki K."/>
            <person name="Tammoja K."/>
            <person name="Tan S.L."/>
            <person name="Tang S."/>
            <person name="Taylor M.S."/>
            <person name="Tegner J."/>
            <person name="Teichmann S.A."/>
            <person name="Ueda H.R."/>
            <person name="van Nimwegen E."/>
            <person name="Verardo R."/>
            <person name="Wei C.L."/>
            <person name="Yagi K."/>
            <person name="Yamanishi H."/>
            <person name="Zabarovsky E."/>
            <person name="Zhu S."/>
            <person name="Zimmer A."/>
            <person name="Hide W."/>
            <person name="Bult C."/>
            <person name="Grimmond S.M."/>
            <person name="Teasdale R.D."/>
            <person name="Liu E.T."/>
            <person name="Brusic V."/>
            <person name="Quackenbush J."/>
            <person name="Wahlestedt C."/>
            <person name="Mattick J.S."/>
            <person name="Hume D.A."/>
            <person name="Kai C."/>
            <person name="Sasaki D."/>
            <person name="Tomaru Y."/>
            <person name="Fukuda S."/>
            <person name="Kanamori-Katayama M."/>
            <person name="Suzuki M."/>
            <person name="Aoki J."/>
            <person name="Arakawa T."/>
            <person name="Iida J."/>
            <person name="Imamura K."/>
            <person name="Itoh M."/>
            <person name="Kato T."/>
            <person name="Kawaji H."/>
            <person name="Kawagashira N."/>
            <person name="Kawashima T."/>
            <person name="Kojima M."/>
            <person name="Kondo S."/>
            <person name="Konno H."/>
            <person name="Nakano K."/>
            <person name="Ninomiya N."/>
            <person name="Nishio T."/>
            <person name="Okada M."/>
            <person name="Plessy C."/>
            <person name="Shibata K."/>
            <person name="Shiraki T."/>
            <person name="Suzuki S."/>
            <person name="Tagami M."/>
            <person name="Waki K."/>
            <person name="Watahiki A."/>
            <person name="Okamura-Oho Y."/>
            <person name="Suzuki H."/>
            <person name="Kawai J."/>
            <person name="Hayashizaki Y."/>
        </authorList>
    </citation>
    <scope>NUCLEOTIDE SEQUENCE [LARGE SCALE MRNA]</scope>
    <source>
        <strain>C57BL/6J</strain>
        <tissue>Thymus</tissue>
    </source>
</reference>
<reference key="4">
    <citation type="journal article" date="2004" name="Genome Res.">
        <title>The status, quality, and expansion of the NIH full-length cDNA project: the Mammalian Gene Collection (MGC).</title>
        <authorList>
            <consortium name="The MGC Project Team"/>
        </authorList>
    </citation>
    <scope>NUCLEOTIDE SEQUENCE [LARGE SCALE MRNA]</scope>
</reference>
<reference key="5">
    <citation type="journal article" date="2010" name="Cell">
        <title>A tissue-specific atlas of mouse protein phosphorylation and expression.</title>
        <authorList>
            <person name="Huttlin E.L."/>
            <person name="Jedrychowski M.P."/>
            <person name="Elias J.E."/>
            <person name="Goswami T."/>
            <person name="Rad R."/>
            <person name="Beausoleil S.A."/>
            <person name="Villen J."/>
            <person name="Haas W."/>
            <person name="Sowa M.E."/>
            <person name="Gygi S.P."/>
        </authorList>
    </citation>
    <scope>IDENTIFICATION BY MASS SPECTROMETRY [LARGE SCALE ANALYSIS]</scope>
    <source>
        <tissue>Lung</tissue>
        <tissue>Spleen</tissue>
    </source>
</reference>
<name>GIMA8_MOUSE</name>
<organism>
    <name type="scientific">Mus musculus</name>
    <name type="common">Mouse</name>
    <dbReference type="NCBI Taxonomy" id="10090"/>
    <lineage>
        <taxon>Eukaryota</taxon>
        <taxon>Metazoa</taxon>
        <taxon>Chordata</taxon>
        <taxon>Craniata</taxon>
        <taxon>Vertebrata</taxon>
        <taxon>Euteleostomi</taxon>
        <taxon>Mammalia</taxon>
        <taxon>Eutheria</taxon>
        <taxon>Euarchontoglires</taxon>
        <taxon>Glires</taxon>
        <taxon>Rodentia</taxon>
        <taxon>Myomorpha</taxon>
        <taxon>Muroidea</taxon>
        <taxon>Muridae</taxon>
        <taxon>Murinae</taxon>
        <taxon>Mus</taxon>
        <taxon>Mus</taxon>
    </lineage>
</organism>
<proteinExistence type="evidence at protein level"/>
<dbReference type="EMBL" id="AJ617674">
    <property type="protein sequence ID" value="CAE85147.1"/>
    <property type="molecule type" value="mRNA"/>
</dbReference>
<dbReference type="EMBL" id="AB178029">
    <property type="protein sequence ID" value="BAD16741.1"/>
    <property type="molecule type" value="mRNA"/>
</dbReference>
<dbReference type="EMBL" id="AK134199">
    <property type="protein sequence ID" value="BAE22049.1"/>
    <property type="molecule type" value="mRNA"/>
</dbReference>
<dbReference type="EMBL" id="BC137943">
    <property type="protein sequence ID" value="AAI37944.1"/>
    <property type="molecule type" value="mRNA"/>
</dbReference>
<dbReference type="EMBL" id="BC137944">
    <property type="protein sequence ID" value="AAI37945.1"/>
    <property type="molecule type" value="mRNA"/>
</dbReference>
<dbReference type="CCDS" id="CCDS20108.1"/>
<dbReference type="RefSeq" id="NP_001070878.1">
    <property type="nucleotide sequence ID" value="NM_001077410.1"/>
</dbReference>
<dbReference type="RefSeq" id="NP_997651.1">
    <property type="nucleotide sequence ID" value="NM_212486.2"/>
</dbReference>
<dbReference type="SMR" id="Q75N62"/>
<dbReference type="FunCoup" id="Q75N62">
    <property type="interactions" value="468"/>
</dbReference>
<dbReference type="IntAct" id="Q75N62">
    <property type="interactions" value="1"/>
</dbReference>
<dbReference type="STRING" id="10090.ENSMUSP00000145255"/>
<dbReference type="GlyGen" id="Q75N62">
    <property type="glycosylation" value="1 site, 1 O-linked glycan (1 site)"/>
</dbReference>
<dbReference type="iPTMnet" id="Q75N62"/>
<dbReference type="PhosphoSitePlus" id="Q75N62"/>
<dbReference type="jPOST" id="Q75N62"/>
<dbReference type="PaxDb" id="10090-ENSMUSP00000077350"/>
<dbReference type="ProteomicsDB" id="267795"/>
<dbReference type="Antibodypedia" id="2915">
    <property type="antibodies" value="125 antibodies from 20 providers"/>
</dbReference>
<dbReference type="DNASU" id="243374"/>
<dbReference type="Ensembl" id="ENSMUST00000203083.3">
    <property type="protein sequence ID" value="ENSMUSP00000145286.2"/>
    <property type="gene ID" value="ENSMUSG00000064262.8"/>
</dbReference>
<dbReference type="Ensembl" id="ENSMUST00000203509.2">
    <property type="protein sequence ID" value="ENSMUSP00000145255.2"/>
    <property type="gene ID" value="ENSMUSG00000064262.8"/>
</dbReference>
<dbReference type="GeneID" id="243374"/>
<dbReference type="KEGG" id="mmu:243374"/>
<dbReference type="UCSC" id="uc009bvf.1">
    <property type="organism name" value="mouse"/>
</dbReference>
<dbReference type="AGR" id="MGI:2685303"/>
<dbReference type="CTD" id="155038"/>
<dbReference type="MGI" id="MGI:2685303">
    <property type="gene designation" value="Gimap8"/>
</dbReference>
<dbReference type="VEuPathDB" id="HostDB:ENSMUSG00000064262"/>
<dbReference type="eggNOG" id="ENOG502RB0C">
    <property type="taxonomic scope" value="Eukaryota"/>
</dbReference>
<dbReference type="GeneTree" id="ENSGT00940000162462"/>
<dbReference type="HOGENOM" id="CLU_010468_5_1_1"/>
<dbReference type="InParanoid" id="Q75N62"/>
<dbReference type="OMA" id="CIFREKE"/>
<dbReference type="OrthoDB" id="8954335at2759"/>
<dbReference type="PhylomeDB" id="Q75N62"/>
<dbReference type="TreeFam" id="TF330845"/>
<dbReference type="BioGRID-ORCS" id="243374">
    <property type="hits" value="1 hit in 76 CRISPR screens"/>
</dbReference>
<dbReference type="PRO" id="PR:Q75N62"/>
<dbReference type="Proteomes" id="UP000000589">
    <property type="component" value="Chromosome 6"/>
</dbReference>
<dbReference type="RNAct" id="Q75N62">
    <property type="molecule type" value="protein"/>
</dbReference>
<dbReference type="Bgee" id="ENSMUSG00000064262">
    <property type="expression patterns" value="Expressed in mesenteric lymph node and 152 other cell types or tissues"/>
</dbReference>
<dbReference type="ExpressionAtlas" id="Q75N62">
    <property type="expression patterns" value="baseline and differential"/>
</dbReference>
<dbReference type="GO" id="GO:0005829">
    <property type="term" value="C:cytosol"/>
    <property type="evidence" value="ECO:0007669"/>
    <property type="project" value="UniProtKB-SubCell"/>
</dbReference>
<dbReference type="GO" id="GO:0005783">
    <property type="term" value="C:endoplasmic reticulum"/>
    <property type="evidence" value="ECO:0007669"/>
    <property type="project" value="UniProtKB-SubCell"/>
</dbReference>
<dbReference type="GO" id="GO:0005794">
    <property type="term" value="C:Golgi apparatus"/>
    <property type="evidence" value="ECO:0007669"/>
    <property type="project" value="UniProtKB-SubCell"/>
</dbReference>
<dbReference type="GO" id="GO:0005739">
    <property type="term" value="C:mitochondrion"/>
    <property type="evidence" value="ECO:0007669"/>
    <property type="project" value="UniProtKB-SubCell"/>
</dbReference>
<dbReference type="GO" id="GO:0005525">
    <property type="term" value="F:GTP binding"/>
    <property type="evidence" value="ECO:0007669"/>
    <property type="project" value="UniProtKB-KW"/>
</dbReference>
<dbReference type="GO" id="GO:0070232">
    <property type="term" value="P:regulation of T cell apoptotic process"/>
    <property type="evidence" value="ECO:0000315"/>
    <property type="project" value="MGI"/>
</dbReference>
<dbReference type="CDD" id="cd01852">
    <property type="entry name" value="AIG1"/>
    <property type="match status" value="3"/>
</dbReference>
<dbReference type="FunFam" id="3.40.50.300:FF:000536">
    <property type="entry name" value="GTPase IMAP family member 8"/>
    <property type="match status" value="3"/>
</dbReference>
<dbReference type="Gene3D" id="3.40.50.300">
    <property type="entry name" value="P-loop containing nucleotide triphosphate hydrolases"/>
    <property type="match status" value="3"/>
</dbReference>
<dbReference type="InterPro" id="IPR006703">
    <property type="entry name" value="G_AIG1"/>
</dbReference>
<dbReference type="InterPro" id="IPR045058">
    <property type="entry name" value="GIMA/IAN/Toc"/>
</dbReference>
<dbReference type="InterPro" id="IPR027417">
    <property type="entry name" value="P-loop_NTPase"/>
</dbReference>
<dbReference type="PANTHER" id="PTHR10903:SF73">
    <property type="entry name" value="GTPASE IMAP FAMILY MEMBER 8"/>
    <property type="match status" value="1"/>
</dbReference>
<dbReference type="PANTHER" id="PTHR10903">
    <property type="entry name" value="GTPASE, IMAP FAMILY MEMBER-RELATED"/>
    <property type="match status" value="1"/>
</dbReference>
<dbReference type="Pfam" id="PF04548">
    <property type="entry name" value="AIG1"/>
    <property type="match status" value="3"/>
</dbReference>
<dbReference type="SUPFAM" id="SSF52540">
    <property type="entry name" value="P-loop containing nucleoside triphosphate hydrolases"/>
    <property type="match status" value="3"/>
</dbReference>
<dbReference type="PROSITE" id="PS51720">
    <property type="entry name" value="G_AIG1"/>
    <property type="match status" value="3"/>
</dbReference>
<protein>
    <recommendedName>
        <fullName>GTPase IMAP family member 8</fullName>
        <shortName>mGIMAP8</shortName>
    </recommendedName>
    <alternativeName>
        <fullName>Immune-associated nucleotide-binding protein 9</fullName>
        <shortName>IAN-9</shortName>
    </alternativeName>
    <alternativeName>
        <fullName>Immunity-associated protein 8</fullName>
    </alternativeName>
</protein>
<gene>
    <name type="primary">Gimap8</name>
    <name evidence="8" type="synonym">Ian9</name>
    <name type="synonym">Imap8</name>
</gene>